<gene>
    <name evidence="1" type="primary">rbfA</name>
    <name type="ordered locus">Ava_2665</name>
</gene>
<accession>Q3M9Q8</accession>
<feature type="chain" id="PRO_1000000067" description="Ribosome-binding factor A">
    <location>
        <begin position="1"/>
        <end position="133"/>
    </location>
</feature>
<comment type="function">
    <text evidence="1">One of several proteins that assist in the late maturation steps of the functional core of the 30S ribosomal subunit. Associates with free 30S ribosomal subunits (but not with 30S subunits that are part of 70S ribosomes or polysomes). Required for efficient processing of 16S rRNA. May interact with the 5'-terminal helix region of 16S rRNA.</text>
</comment>
<comment type="subunit">
    <text evidence="1">Monomer. Binds 30S ribosomal subunits, but not 50S ribosomal subunits or 70S ribosomes.</text>
</comment>
<comment type="subcellular location">
    <subcellularLocation>
        <location evidence="1">Cytoplasm</location>
    </subcellularLocation>
</comment>
<comment type="similarity">
    <text evidence="1">Belongs to the RbfA family.</text>
</comment>
<organism>
    <name type="scientific">Trichormus variabilis (strain ATCC 29413 / PCC 7937)</name>
    <name type="common">Anabaena variabilis</name>
    <dbReference type="NCBI Taxonomy" id="240292"/>
    <lineage>
        <taxon>Bacteria</taxon>
        <taxon>Bacillati</taxon>
        <taxon>Cyanobacteriota</taxon>
        <taxon>Cyanophyceae</taxon>
        <taxon>Nostocales</taxon>
        <taxon>Nostocaceae</taxon>
        <taxon>Trichormus</taxon>
    </lineage>
</organism>
<sequence length="133" mass="14682">MATNRRVSRVAELIKREVSQMLINGIKDDRVGTGMVSVTDVDVSGDLQHAKIYVSIYGTEEAKAETMAGLKSATGFVRSELGARVRLRRTPEVTFIEDRSIERGTKVLTLLNKLENARSLDDIPSADDSLDED</sequence>
<name>RBFA_TRIV2</name>
<dbReference type="EMBL" id="CP000117">
    <property type="protein sequence ID" value="ABA22278.1"/>
    <property type="molecule type" value="Genomic_DNA"/>
</dbReference>
<dbReference type="SMR" id="Q3M9Q8"/>
<dbReference type="STRING" id="240292.Ava_2665"/>
<dbReference type="KEGG" id="ava:Ava_2665"/>
<dbReference type="eggNOG" id="COG0858">
    <property type="taxonomic scope" value="Bacteria"/>
</dbReference>
<dbReference type="HOGENOM" id="CLU_089475_2_1_3"/>
<dbReference type="Proteomes" id="UP000002533">
    <property type="component" value="Chromosome"/>
</dbReference>
<dbReference type="GO" id="GO:0005829">
    <property type="term" value="C:cytosol"/>
    <property type="evidence" value="ECO:0007669"/>
    <property type="project" value="TreeGrafter"/>
</dbReference>
<dbReference type="GO" id="GO:0043024">
    <property type="term" value="F:ribosomal small subunit binding"/>
    <property type="evidence" value="ECO:0007669"/>
    <property type="project" value="TreeGrafter"/>
</dbReference>
<dbReference type="GO" id="GO:0030490">
    <property type="term" value="P:maturation of SSU-rRNA"/>
    <property type="evidence" value="ECO:0007669"/>
    <property type="project" value="UniProtKB-UniRule"/>
</dbReference>
<dbReference type="Gene3D" id="3.30.300.20">
    <property type="match status" value="1"/>
</dbReference>
<dbReference type="HAMAP" id="MF_00003">
    <property type="entry name" value="RbfA"/>
    <property type="match status" value="1"/>
</dbReference>
<dbReference type="InterPro" id="IPR015946">
    <property type="entry name" value="KH_dom-like_a/b"/>
</dbReference>
<dbReference type="InterPro" id="IPR000238">
    <property type="entry name" value="RbfA"/>
</dbReference>
<dbReference type="InterPro" id="IPR023799">
    <property type="entry name" value="RbfA_dom_sf"/>
</dbReference>
<dbReference type="InterPro" id="IPR020053">
    <property type="entry name" value="Ribosome-bd_factorA_CS"/>
</dbReference>
<dbReference type="NCBIfam" id="TIGR00082">
    <property type="entry name" value="rbfA"/>
    <property type="match status" value="1"/>
</dbReference>
<dbReference type="PANTHER" id="PTHR33515">
    <property type="entry name" value="RIBOSOME-BINDING FACTOR A, CHLOROPLASTIC-RELATED"/>
    <property type="match status" value="1"/>
</dbReference>
<dbReference type="PANTHER" id="PTHR33515:SF1">
    <property type="entry name" value="RIBOSOME-BINDING FACTOR A, CHLOROPLASTIC-RELATED"/>
    <property type="match status" value="1"/>
</dbReference>
<dbReference type="Pfam" id="PF02033">
    <property type="entry name" value="RBFA"/>
    <property type="match status" value="1"/>
</dbReference>
<dbReference type="SUPFAM" id="SSF89919">
    <property type="entry name" value="Ribosome-binding factor A, RbfA"/>
    <property type="match status" value="1"/>
</dbReference>
<dbReference type="PROSITE" id="PS01319">
    <property type="entry name" value="RBFA"/>
    <property type="match status" value="1"/>
</dbReference>
<evidence type="ECO:0000255" key="1">
    <source>
        <dbReference type="HAMAP-Rule" id="MF_00003"/>
    </source>
</evidence>
<keyword id="KW-0963">Cytoplasm</keyword>
<keyword id="KW-0690">Ribosome biogenesis</keyword>
<protein>
    <recommendedName>
        <fullName evidence="1">Ribosome-binding factor A</fullName>
    </recommendedName>
</protein>
<reference key="1">
    <citation type="journal article" date="2014" name="Stand. Genomic Sci.">
        <title>Complete genome sequence of Anabaena variabilis ATCC 29413.</title>
        <authorList>
            <person name="Thiel T."/>
            <person name="Pratte B.S."/>
            <person name="Zhong J."/>
            <person name="Goodwin L."/>
            <person name="Copeland A."/>
            <person name="Lucas S."/>
            <person name="Han C."/>
            <person name="Pitluck S."/>
            <person name="Land M.L."/>
            <person name="Kyrpides N.C."/>
            <person name="Woyke T."/>
        </authorList>
    </citation>
    <scope>NUCLEOTIDE SEQUENCE [LARGE SCALE GENOMIC DNA]</scope>
    <source>
        <strain>ATCC 29413 / PCC 7937</strain>
    </source>
</reference>
<proteinExistence type="inferred from homology"/>